<reference key="1">
    <citation type="journal article" date="2006" name="Proc. Natl. Acad. Sci. U.S.A.">
        <title>Comparative genomics of the lactic acid bacteria.</title>
        <authorList>
            <person name="Makarova K.S."/>
            <person name="Slesarev A."/>
            <person name="Wolf Y.I."/>
            <person name="Sorokin A."/>
            <person name="Mirkin B."/>
            <person name="Koonin E.V."/>
            <person name="Pavlov A."/>
            <person name="Pavlova N."/>
            <person name="Karamychev V."/>
            <person name="Polouchine N."/>
            <person name="Shakhova V."/>
            <person name="Grigoriev I."/>
            <person name="Lou Y."/>
            <person name="Rohksar D."/>
            <person name="Lucas S."/>
            <person name="Huang K."/>
            <person name="Goodstein D.M."/>
            <person name="Hawkins T."/>
            <person name="Plengvidhya V."/>
            <person name="Welker D."/>
            <person name="Hughes J."/>
            <person name="Goh Y."/>
            <person name="Benson A."/>
            <person name="Baldwin K."/>
            <person name="Lee J.-H."/>
            <person name="Diaz-Muniz I."/>
            <person name="Dosti B."/>
            <person name="Smeianov V."/>
            <person name="Wechter W."/>
            <person name="Barabote R."/>
            <person name="Lorca G."/>
            <person name="Altermann E."/>
            <person name="Barrangou R."/>
            <person name="Ganesan B."/>
            <person name="Xie Y."/>
            <person name="Rawsthorne H."/>
            <person name="Tamir D."/>
            <person name="Parker C."/>
            <person name="Breidt F."/>
            <person name="Broadbent J.R."/>
            <person name="Hutkins R."/>
            <person name="O'Sullivan D."/>
            <person name="Steele J."/>
            <person name="Unlu G."/>
            <person name="Saier M.H. Jr."/>
            <person name="Klaenhammer T."/>
            <person name="Richardson P."/>
            <person name="Kozyavkin S."/>
            <person name="Weimer B.C."/>
            <person name="Mills D.A."/>
        </authorList>
    </citation>
    <scope>NUCLEOTIDE SEQUENCE [LARGE SCALE GENOMIC DNA]</scope>
    <source>
        <strain>ATCC BAA-331 / PSU-1</strain>
    </source>
</reference>
<organism>
    <name type="scientific">Oenococcus oeni (strain ATCC BAA-331 / PSU-1)</name>
    <dbReference type="NCBI Taxonomy" id="203123"/>
    <lineage>
        <taxon>Bacteria</taxon>
        <taxon>Bacillati</taxon>
        <taxon>Bacillota</taxon>
        <taxon>Bacilli</taxon>
        <taxon>Lactobacillales</taxon>
        <taxon>Lactobacillaceae</taxon>
        <taxon>Oenococcus</taxon>
    </lineage>
</organism>
<sequence length="457" mass="50292">MKKTMFDKIWHQHVITGEPGEPQLIYVDLQLLHEVTSPQAFEGLREKNRQVRRPDRNFATMDHNVPTVDIFNIKDLISKKQIETLAKNTKDFGIRLAGMGSKDQGIVHVIGPQLGLTQPGMVIVCGDSHTATHGAFGSIAFGIGTSEVEHVLATQTIWQTKPKTIGIHVHGKLSIGVYAKDIIMGIIAREGVSFGTGYAVEFYGDTIRNMNMEERMTLCNMVIEGGAKMGSIQPDQTTFDYIADRKYAPGNMEKAVSYWKQFYTDSPDAFDKVIDFSVNELAPFVSWGTNPGMAVPIDQPFPKIKNEEDKKAYEYVGLKAGEKANQIPIKFVFFGSCTNGRLSDLIIAAKVLKNKHIKNGITALVVPGSRKIKEKAEKIGLDKIFKEAGCEWREPGCSACLGMNPDRVPAGIHCASTSNRNFAGRQGAGSRTHLASPAMVAAAAIHGRFIDIRKEII</sequence>
<evidence type="ECO:0000255" key="1">
    <source>
        <dbReference type="HAMAP-Rule" id="MF_01026"/>
    </source>
</evidence>
<dbReference type="EC" id="4.2.1.33" evidence="1"/>
<dbReference type="EMBL" id="CP000411">
    <property type="protein sequence ID" value="ABJ57569.1"/>
    <property type="molecule type" value="Genomic_DNA"/>
</dbReference>
<dbReference type="RefSeq" id="WP_011677820.1">
    <property type="nucleotide sequence ID" value="NC_008528.1"/>
</dbReference>
<dbReference type="SMR" id="Q04DA3"/>
<dbReference type="STRING" id="203123.OEOE_1725"/>
<dbReference type="KEGG" id="ooe:OEOE_1725"/>
<dbReference type="PATRIC" id="fig|203123.7.peg.1761"/>
<dbReference type="eggNOG" id="COG0065">
    <property type="taxonomic scope" value="Bacteria"/>
</dbReference>
<dbReference type="HOGENOM" id="CLU_006714_3_4_9"/>
<dbReference type="UniPathway" id="UPA00048">
    <property type="reaction ID" value="UER00071"/>
</dbReference>
<dbReference type="Proteomes" id="UP000000774">
    <property type="component" value="Chromosome"/>
</dbReference>
<dbReference type="GO" id="GO:0003861">
    <property type="term" value="F:3-isopropylmalate dehydratase activity"/>
    <property type="evidence" value="ECO:0007669"/>
    <property type="project" value="UniProtKB-UniRule"/>
</dbReference>
<dbReference type="GO" id="GO:0051539">
    <property type="term" value="F:4 iron, 4 sulfur cluster binding"/>
    <property type="evidence" value="ECO:0007669"/>
    <property type="project" value="UniProtKB-KW"/>
</dbReference>
<dbReference type="GO" id="GO:0046872">
    <property type="term" value="F:metal ion binding"/>
    <property type="evidence" value="ECO:0007669"/>
    <property type="project" value="UniProtKB-KW"/>
</dbReference>
<dbReference type="GO" id="GO:0009098">
    <property type="term" value="P:L-leucine biosynthetic process"/>
    <property type="evidence" value="ECO:0007669"/>
    <property type="project" value="UniProtKB-UniRule"/>
</dbReference>
<dbReference type="CDD" id="cd01583">
    <property type="entry name" value="IPMI"/>
    <property type="match status" value="1"/>
</dbReference>
<dbReference type="Gene3D" id="3.30.499.10">
    <property type="entry name" value="Aconitase, domain 3"/>
    <property type="match status" value="2"/>
</dbReference>
<dbReference type="HAMAP" id="MF_01026">
    <property type="entry name" value="LeuC_type1"/>
    <property type="match status" value="1"/>
</dbReference>
<dbReference type="InterPro" id="IPR004430">
    <property type="entry name" value="3-IsopropMal_deHydase_lsu"/>
</dbReference>
<dbReference type="InterPro" id="IPR015931">
    <property type="entry name" value="Acnase/IPM_dHydase_lsu_aba_1/3"/>
</dbReference>
<dbReference type="InterPro" id="IPR001030">
    <property type="entry name" value="Acoase/IPM_deHydtase_lsu_aba"/>
</dbReference>
<dbReference type="InterPro" id="IPR018136">
    <property type="entry name" value="Aconitase_4Fe-4S_BS"/>
</dbReference>
<dbReference type="InterPro" id="IPR036008">
    <property type="entry name" value="Aconitase_4Fe-4S_dom"/>
</dbReference>
<dbReference type="InterPro" id="IPR050067">
    <property type="entry name" value="IPM_dehydratase_rel_enz"/>
</dbReference>
<dbReference type="InterPro" id="IPR033941">
    <property type="entry name" value="IPMI_cat"/>
</dbReference>
<dbReference type="NCBIfam" id="TIGR00170">
    <property type="entry name" value="leuC"/>
    <property type="match status" value="1"/>
</dbReference>
<dbReference type="NCBIfam" id="NF004016">
    <property type="entry name" value="PRK05478.1"/>
    <property type="match status" value="1"/>
</dbReference>
<dbReference type="NCBIfam" id="NF009116">
    <property type="entry name" value="PRK12466.1"/>
    <property type="match status" value="1"/>
</dbReference>
<dbReference type="PANTHER" id="PTHR43822:SF9">
    <property type="entry name" value="3-ISOPROPYLMALATE DEHYDRATASE"/>
    <property type="match status" value="1"/>
</dbReference>
<dbReference type="PANTHER" id="PTHR43822">
    <property type="entry name" value="HOMOACONITASE, MITOCHONDRIAL-RELATED"/>
    <property type="match status" value="1"/>
</dbReference>
<dbReference type="Pfam" id="PF00330">
    <property type="entry name" value="Aconitase"/>
    <property type="match status" value="1"/>
</dbReference>
<dbReference type="PRINTS" id="PR00415">
    <property type="entry name" value="ACONITASE"/>
</dbReference>
<dbReference type="SUPFAM" id="SSF53732">
    <property type="entry name" value="Aconitase iron-sulfur domain"/>
    <property type="match status" value="1"/>
</dbReference>
<dbReference type="PROSITE" id="PS01244">
    <property type="entry name" value="ACONITASE_2"/>
    <property type="match status" value="1"/>
</dbReference>
<accession>Q04DA3</accession>
<keyword id="KW-0004">4Fe-4S</keyword>
<keyword id="KW-0028">Amino-acid biosynthesis</keyword>
<keyword id="KW-0100">Branched-chain amino acid biosynthesis</keyword>
<keyword id="KW-0408">Iron</keyword>
<keyword id="KW-0411">Iron-sulfur</keyword>
<keyword id="KW-0432">Leucine biosynthesis</keyword>
<keyword id="KW-0456">Lyase</keyword>
<keyword id="KW-0479">Metal-binding</keyword>
<keyword id="KW-1185">Reference proteome</keyword>
<feature type="chain" id="PRO_1000063579" description="3-isopropylmalate dehydratase large subunit">
    <location>
        <begin position="1"/>
        <end position="457"/>
    </location>
</feature>
<feature type="binding site" evidence="1">
    <location>
        <position position="337"/>
    </location>
    <ligand>
        <name>[4Fe-4S] cluster</name>
        <dbReference type="ChEBI" id="CHEBI:49883"/>
    </ligand>
</feature>
<feature type="binding site" evidence="1">
    <location>
        <position position="397"/>
    </location>
    <ligand>
        <name>[4Fe-4S] cluster</name>
        <dbReference type="ChEBI" id="CHEBI:49883"/>
    </ligand>
</feature>
<feature type="binding site" evidence="1">
    <location>
        <position position="400"/>
    </location>
    <ligand>
        <name>[4Fe-4S] cluster</name>
        <dbReference type="ChEBI" id="CHEBI:49883"/>
    </ligand>
</feature>
<name>LEUC_OENOB</name>
<protein>
    <recommendedName>
        <fullName evidence="1">3-isopropylmalate dehydratase large subunit</fullName>
        <ecNumber evidence="1">4.2.1.33</ecNumber>
    </recommendedName>
    <alternativeName>
        <fullName evidence="1">Alpha-IPM isomerase</fullName>
        <shortName evidence="1">IPMI</shortName>
    </alternativeName>
    <alternativeName>
        <fullName evidence="1">Isopropylmalate isomerase</fullName>
    </alternativeName>
</protein>
<gene>
    <name evidence="1" type="primary">leuC</name>
    <name type="ordered locus">OEOE_1725</name>
</gene>
<comment type="function">
    <text evidence="1">Catalyzes the isomerization between 2-isopropylmalate and 3-isopropylmalate, via the formation of 2-isopropylmaleate.</text>
</comment>
<comment type="catalytic activity">
    <reaction evidence="1">
        <text>(2R,3S)-3-isopropylmalate = (2S)-2-isopropylmalate</text>
        <dbReference type="Rhea" id="RHEA:32287"/>
        <dbReference type="ChEBI" id="CHEBI:1178"/>
        <dbReference type="ChEBI" id="CHEBI:35121"/>
        <dbReference type="EC" id="4.2.1.33"/>
    </reaction>
</comment>
<comment type="cofactor">
    <cofactor evidence="1">
        <name>[4Fe-4S] cluster</name>
        <dbReference type="ChEBI" id="CHEBI:49883"/>
    </cofactor>
    <text evidence="1">Binds 1 [4Fe-4S] cluster per subunit.</text>
</comment>
<comment type="pathway">
    <text evidence="1">Amino-acid biosynthesis; L-leucine biosynthesis; L-leucine from 3-methyl-2-oxobutanoate: step 2/4.</text>
</comment>
<comment type="subunit">
    <text evidence="1">Heterodimer of LeuC and LeuD.</text>
</comment>
<comment type="similarity">
    <text evidence="1">Belongs to the aconitase/IPM isomerase family. LeuC type 1 subfamily.</text>
</comment>
<proteinExistence type="inferred from homology"/>